<protein>
    <recommendedName>
        <fullName evidence="1">33 kDa chaperonin</fullName>
    </recommendedName>
    <alternativeName>
        <fullName evidence="1">Heat shock protein 33 homolog</fullName>
        <shortName evidence="1">HSP33</shortName>
    </alternativeName>
</protein>
<sequence length="291" mass="32483">MANNTLHRYLFEDLSVRGELVQLDDAYQQIISSKEYPKPVQNLLGELLVATTLLTATLKFEGSITLQLQGDGPVSLAVINGDNNQKVRGVARFEGDIAEDATLHQLMGRGYLVITITPKDGERYQGVVALEGENLAQCFEGYFERSEQLKTRLWLRLGEYEGKPHAAGMLLQVMPDGTGSENDFEHLEQLTDTIKNEELFGLPAEDVLYRLYNQDKVQLFEPQDVEFFCGCSRERSGGAIVTIDRAEVDDIIKTEGKISLHCDYCGTSYDFDSIDVANLFEQATSGNDTVH</sequence>
<keyword id="KW-0143">Chaperone</keyword>
<keyword id="KW-0963">Cytoplasm</keyword>
<keyword id="KW-1015">Disulfide bond</keyword>
<keyword id="KW-0676">Redox-active center</keyword>
<keyword id="KW-1185">Reference proteome</keyword>
<keyword id="KW-0862">Zinc</keyword>
<proteinExistence type="inferred from homology"/>
<organism>
    <name type="scientific">Aliivibrio fischeri (strain ATCC 700601 / ES114)</name>
    <name type="common">Vibrio fischeri</name>
    <dbReference type="NCBI Taxonomy" id="312309"/>
    <lineage>
        <taxon>Bacteria</taxon>
        <taxon>Pseudomonadati</taxon>
        <taxon>Pseudomonadota</taxon>
        <taxon>Gammaproteobacteria</taxon>
        <taxon>Vibrionales</taxon>
        <taxon>Vibrionaceae</taxon>
        <taxon>Aliivibrio</taxon>
    </lineage>
</organism>
<dbReference type="EMBL" id="CP000020">
    <property type="protein sequence ID" value="AAW86972.1"/>
    <property type="molecule type" value="Genomic_DNA"/>
</dbReference>
<dbReference type="RefSeq" id="WP_005421430.1">
    <property type="nucleotide sequence ID" value="NZ_CAWLES010000001.1"/>
</dbReference>
<dbReference type="RefSeq" id="YP_205860.1">
    <property type="nucleotide sequence ID" value="NC_006840.2"/>
</dbReference>
<dbReference type="SMR" id="Q5E1X4"/>
<dbReference type="STRING" id="312309.VF_2477"/>
<dbReference type="EnsemblBacteria" id="AAW86972">
    <property type="protein sequence ID" value="AAW86972"/>
    <property type="gene ID" value="VF_2477"/>
</dbReference>
<dbReference type="GeneID" id="54165207"/>
<dbReference type="KEGG" id="vfi:VF_2477"/>
<dbReference type="PATRIC" id="fig|312309.11.peg.2504"/>
<dbReference type="eggNOG" id="COG1281">
    <property type="taxonomic scope" value="Bacteria"/>
</dbReference>
<dbReference type="HOGENOM" id="CLU_054493_0_0_6"/>
<dbReference type="OrthoDB" id="9793753at2"/>
<dbReference type="Proteomes" id="UP000000537">
    <property type="component" value="Chromosome I"/>
</dbReference>
<dbReference type="GO" id="GO:0005737">
    <property type="term" value="C:cytoplasm"/>
    <property type="evidence" value="ECO:0007669"/>
    <property type="project" value="UniProtKB-SubCell"/>
</dbReference>
<dbReference type="GO" id="GO:0044183">
    <property type="term" value="F:protein folding chaperone"/>
    <property type="evidence" value="ECO:0007669"/>
    <property type="project" value="TreeGrafter"/>
</dbReference>
<dbReference type="GO" id="GO:0051082">
    <property type="term" value="F:unfolded protein binding"/>
    <property type="evidence" value="ECO:0007669"/>
    <property type="project" value="UniProtKB-UniRule"/>
</dbReference>
<dbReference type="GO" id="GO:0042026">
    <property type="term" value="P:protein refolding"/>
    <property type="evidence" value="ECO:0007669"/>
    <property type="project" value="TreeGrafter"/>
</dbReference>
<dbReference type="CDD" id="cd00498">
    <property type="entry name" value="Hsp33"/>
    <property type="match status" value="1"/>
</dbReference>
<dbReference type="Gene3D" id="1.10.287.480">
    <property type="entry name" value="helix hairpin bin"/>
    <property type="match status" value="1"/>
</dbReference>
<dbReference type="Gene3D" id="3.55.30.10">
    <property type="entry name" value="Hsp33 domain"/>
    <property type="match status" value="1"/>
</dbReference>
<dbReference type="Gene3D" id="3.90.1280.10">
    <property type="entry name" value="HSP33 redox switch-like"/>
    <property type="match status" value="1"/>
</dbReference>
<dbReference type="HAMAP" id="MF_00117">
    <property type="entry name" value="HslO"/>
    <property type="match status" value="1"/>
</dbReference>
<dbReference type="InterPro" id="IPR000397">
    <property type="entry name" value="Heat_shock_Hsp33"/>
</dbReference>
<dbReference type="InterPro" id="IPR016154">
    <property type="entry name" value="Heat_shock_Hsp33_C"/>
</dbReference>
<dbReference type="InterPro" id="IPR016153">
    <property type="entry name" value="Heat_shock_Hsp33_N"/>
</dbReference>
<dbReference type="InterPro" id="IPR023212">
    <property type="entry name" value="Hsp33_helix_hairpin_bin_dom_sf"/>
</dbReference>
<dbReference type="NCBIfam" id="NF001033">
    <property type="entry name" value="PRK00114.1"/>
    <property type="match status" value="1"/>
</dbReference>
<dbReference type="PANTHER" id="PTHR30111">
    <property type="entry name" value="33 KDA CHAPERONIN"/>
    <property type="match status" value="1"/>
</dbReference>
<dbReference type="PANTHER" id="PTHR30111:SF1">
    <property type="entry name" value="33 KDA CHAPERONIN"/>
    <property type="match status" value="1"/>
</dbReference>
<dbReference type="Pfam" id="PF01430">
    <property type="entry name" value="HSP33"/>
    <property type="match status" value="1"/>
</dbReference>
<dbReference type="PIRSF" id="PIRSF005261">
    <property type="entry name" value="Heat_shock_Hsp33"/>
    <property type="match status" value="1"/>
</dbReference>
<dbReference type="SUPFAM" id="SSF64397">
    <property type="entry name" value="Hsp33 domain"/>
    <property type="match status" value="1"/>
</dbReference>
<dbReference type="SUPFAM" id="SSF118352">
    <property type="entry name" value="HSP33 redox switch-like"/>
    <property type="match status" value="1"/>
</dbReference>
<feature type="chain" id="PRO_0000238110" description="33 kDa chaperonin">
    <location>
        <begin position="1"/>
        <end position="291"/>
    </location>
</feature>
<feature type="disulfide bond" description="Redox-active" evidence="1">
    <location>
        <begin position="229"/>
        <end position="231"/>
    </location>
</feature>
<feature type="disulfide bond" description="Redox-active" evidence="1">
    <location>
        <begin position="262"/>
        <end position="265"/>
    </location>
</feature>
<name>HSLO_ALIF1</name>
<accession>Q5E1X4</accession>
<gene>
    <name evidence="1" type="primary">hslO</name>
    <name type="ordered locus">VF_2477</name>
</gene>
<reference key="1">
    <citation type="journal article" date="2005" name="Proc. Natl. Acad. Sci. U.S.A.">
        <title>Complete genome sequence of Vibrio fischeri: a symbiotic bacterium with pathogenic congeners.</title>
        <authorList>
            <person name="Ruby E.G."/>
            <person name="Urbanowski M."/>
            <person name="Campbell J."/>
            <person name="Dunn A."/>
            <person name="Faini M."/>
            <person name="Gunsalus R."/>
            <person name="Lostroh P."/>
            <person name="Lupp C."/>
            <person name="McCann J."/>
            <person name="Millikan D."/>
            <person name="Schaefer A."/>
            <person name="Stabb E."/>
            <person name="Stevens A."/>
            <person name="Visick K."/>
            <person name="Whistler C."/>
            <person name="Greenberg E.P."/>
        </authorList>
    </citation>
    <scope>NUCLEOTIDE SEQUENCE [LARGE SCALE GENOMIC DNA]</scope>
    <source>
        <strain>ATCC 700601 / ES114</strain>
    </source>
</reference>
<evidence type="ECO:0000255" key="1">
    <source>
        <dbReference type="HAMAP-Rule" id="MF_00117"/>
    </source>
</evidence>
<comment type="function">
    <text evidence="1">Redox regulated molecular chaperone. Protects both thermally unfolding and oxidatively damaged proteins from irreversible aggregation. Plays an important role in the bacterial defense system toward oxidative stress.</text>
</comment>
<comment type="subcellular location">
    <subcellularLocation>
        <location evidence="1">Cytoplasm</location>
    </subcellularLocation>
</comment>
<comment type="PTM">
    <text evidence="1">Under oxidizing conditions two disulfide bonds are formed involving the reactive cysteines. Under reducing conditions zinc is bound to the reactive cysteines and the protein is inactive.</text>
</comment>
<comment type="similarity">
    <text evidence="1">Belongs to the HSP33 family.</text>
</comment>